<feature type="chain" id="PRO_0000313384" description="DNA ligase">
    <location>
        <begin position="1"/>
        <end position="691"/>
    </location>
</feature>
<feature type="domain" description="BRCT" evidence="1">
    <location>
        <begin position="613"/>
        <end position="691"/>
    </location>
</feature>
<feature type="active site" description="N6-AMP-lysine intermediate" evidence="1">
    <location>
        <position position="137"/>
    </location>
</feature>
<feature type="binding site" evidence="1">
    <location>
        <begin position="53"/>
        <end position="57"/>
    </location>
    <ligand>
        <name>NAD(+)</name>
        <dbReference type="ChEBI" id="CHEBI:57540"/>
    </ligand>
</feature>
<feature type="binding site" evidence="1">
    <location>
        <begin position="102"/>
        <end position="103"/>
    </location>
    <ligand>
        <name>NAD(+)</name>
        <dbReference type="ChEBI" id="CHEBI:57540"/>
    </ligand>
</feature>
<feature type="binding site" evidence="1">
    <location>
        <position position="135"/>
    </location>
    <ligand>
        <name>NAD(+)</name>
        <dbReference type="ChEBI" id="CHEBI:57540"/>
    </ligand>
</feature>
<feature type="binding site" evidence="1">
    <location>
        <position position="158"/>
    </location>
    <ligand>
        <name>NAD(+)</name>
        <dbReference type="ChEBI" id="CHEBI:57540"/>
    </ligand>
</feature>
<feature type="binding site" evidence="1">
    <location>
        <position position="195"/>
    </location>
    <ligand>
        <name>NAD(+)</name>
        <dbReference type="ChEBI" id="CHEBI:57540"/>
    </ligand>
</feature>
<feature type="binding site" evidence="1">
    <location>
        <position position="310"/>
    </location>
    <ligand>
        <name>NAD(+)</name>
        <dbReference type="ChEBI" id="CHEBI:57540"/>
    </ligand>
</feature>
<feature type="binding site" evidence="1">
    <location>
        <position position="334"/>
    </location>
    <ligand>
        <name>NAD(+)</name>
        <dbReference type="ChEBI" id="CHEBI:57540"/>
    </ligand>
</feature>
<feature type="binding site" evidence="1">
    <location>
        <position position="428"/>
    </location>
    <ligand>
        <name>Zn(2+)</name>
        <dbReference type="ChEBI" id="CHEBI:29105"/>
    </ligand>
</feature>
<feature type="binding site" evidence="1">
    <location>
        <position position="431"/>
    </location>
    <ligand>
        <name>Zn(2+)</name>
        <dbReference type="ChEBI" id="CHEBI:29105"/>
    </ligand>
</feature>
<feature type="binding site" evidence="1">
    <location>
        <position position="446"/>
    </location>
    <ligand>
        <name>Zn(2+)</name>
        <dbReference type="ChEBI" id="CHEBI:29105"/>
    </ligand>
</feature>
<feature type="binding site" evidence="1">
    <location>
        <position position="452"/>
    </location>
    <ligand>
        <name>Zn(2+)</name>
        <dbReference type="ChEBI" id="CHEBI:29105"/>
    </ligand>
</feature>
<gene>
    <name evidence="1" type="primary">ligA</name>
    <name type="ordered locus">Pcryo_0351</name>
</gene>
<reference key="1">
    <citation type="submission" date="2006-03" db="EMBL/GenBank/DDBJ databases">
        <title>Complete sequence of chromosome of Psychrobacter cryohalolentis K5.</title>
        <authorList>
            <consortium name="US DOE Joint Genome Institute"/>
            <person name="Copeland A."/>
            <person name="Lucas S."/>
            <person name="Lapidus A."/>
            <person name="Barry K."/>
            <person name="Detter J.C."/>
            <person name="Glavina T."/>
            <person name="Hammon N."/>
            <person name="Israni S."/>
            <person name="Dalin E."/>
            <person name="Tice H."/>
            <person name="Pitluck S."/>
            <person name="Brettin T."/>
            <person name="Bruce D."/>
            <person name="Han C."/>
            <person name="Tapia R."/>
            <person name="Sims D.R."/>
            <person name="Gilna P."/>
            <person name="Schmutz J."/>
            <person name="Larimer F."/>
            <person name="Land M."/>
            <person name="Hauser L."/>
            <person name="Kyrpides N."/>
            <person name="Kim E."/>
            <person name="Richardson P."/>
        </authorList>
    </citation>
    <scope>NUCLEOTIDE SEQUENCE [LARGE SCALE GENOMIC DNA]</scope>
    <source>
        <strain>ATCC BAA-1226 / DSM 17306 / VKM B-2378 / K5</strain>
    </source>
</reference>
<evidence type="ECO:0000255" key="1">
    <source>
        <dbReference type="HAMAP-Rule" id="MF_01588"/>
    </source>
</evidence>
<protein>
    <recommendedName>
        <fullName evidence="1">DNA ligase</fullName>
        <ecNumber evidence="1">6.5.1.2</ecNumber>
    </recommendedName>
    <alternativeName>
        <fullName evidence="1">Polydeoxyribonucleotide synthase [NAD(+)]</fullName>
    </alternativeName>
</protein>
<accession>Q1QDW8</accession>
<sequence>MTDPIAPLTSKDINTAKSAANEDAIVAQMRTFIDALKKHNYAYYVLDNPILEDSEYDQLRRSLLELEEEYPDLIQPDSPINQVGDMPLSAFTQVTHDIPMLSLGNVFEYDDLRDFMRRVNDRLSVAQQSPEYEMELKLDGLAVSLKYAYGKFVQAVTRGDGQTGEDITQNAKTIRNLPLWIPAASDIELLEVRGEVLMPKAGFERLNRLAEEKGDKTFANPRNAAAGSLRQLDPAIAASRPLAFYCYSVNQGLPEHIKTQSAALAWLKTIGFTVSAVEVVQNPREAQAYYESVKETRGDLPFEIDGMVIKVNSLALQQQLGFLSREPRWATAYKFPAETVMTRLHAIEWQVGRTGAITPVGKLEPVKVGGVTVSNVTLHNFGEIQRLDVRAGDMVSVHRAGDVIPKVTRVWTDQRPENSEPVKLPSTCPVCDSPVVLPKDEALARCTGGLFCPAQQVEALIHFVSRRAMDIDGLGASWLISFFEHGLVKTVADIYQLHNHQEELITLEKLGEKSVQNILSAIEASKQTTLARFIYALGIRGVGETTAQNLAQQFGDLDALMSASIEKLLLTPDVGAITAELTYKFFRAPHNIEVINALREAGVHWDKVEQVASEGLPLDGQTWVITGALDSMARDEAKAKLQALGAKVSGSISAKTTALLAGDKAGSKMAKAEKLGVKVVGEEEFLVLVGE</sequence>
<comment type="function">
    <text evidence="1">DNA ligase that catalyzes the formation of phosphodiester linkages between 5'-phosphoryl and 3'-hydroxyl groups in double-stranded DNA using NAD as a coenzyme and as the energy source for the reaction. It is essential for DNA replication and repair of damaged DNA.</text>
</comment>
<comment type="catalytic activity">
    <reaction evidence="1">
        <text>NAD(+) + (deoxyribonucleotide)n-3'-hydroxyl + 5'-phospho-(deoxyribonucleotide)m = (deoxyribonucleotide)n+m + AMP + beta-nicotinamide D-nucleotide.</text>
        <dbReference type="EC" id="6.5.1.2"/>
    </reaction>
</comment>
<comment type="cofactor">
    <cofactor evidence="1">
        <name>Mg(2+)</name>
        <dbReference type="ChEBI" id="CHEBI:18420"/>
    </cofactor>
    <cofactor evidence="1">
        <name>Mn(2+)</name>
        <dbReference type="ChEBI" id="CHEBI:29035"/>
    </cofactor>
</comment>
<comment type="similarity">
    <text evidence="1">Belongs to the NAD-dependent DNA ligase family. LigA subfamily.</text>
</comment>
<keyword id="KW-0227">DNA damage</keyword>
<keyword id="KW-0234">DNA repair</keyword>
<keyword id="KW-0235">DNA replication</keyword>
<keyword id="KW-0436">Ligase</keyword>
<keyword id="KW-0460">Magnesium</keyword>
<keyword id="KW-0464">Manganese</keyword>
<keyword id="KW-0479">Metal-binding</keyword>
<keyword id="KW-0520">NAD</keyword>
<keyword id="KW-0862">Zinc</keyword>
<organism>
    <name type="scientific">Psychrobacter cryohalolentis (strain ATCC BAA-1226 / DSM 17306 / VKM B-2378 / K5)</name>
    <dbReference type="NCBI Taxonomy" id="335284"/>
    <lineage>
        <taxon>Bacteria</taxon>
        <taxon>Pseudomonadati</taxon>
        <taxon>Pseudomonadota</taxon>
        <taxon>Gammaproteobacteria</taxon>
        <taxon>Moraxellales</taxon>
        <taxon>Moraxellaceae</taxon>
        <taxon>Psychrobacter</taxon>
    </lineage>
</organism>
<dbReference type="EC" id="6.5.1.2" evidence="1"/>
<dbReference type="EMBL" id="CP000323">
    <property type="protein sequence ID" value="ABE74135.1"/>
    <property type="molecule type" value="Genomic_DNA"/>
</dbReference>
<dbReference type="RefSeq" id="WP_011512721.1">
    <property type="nucleotide sequence ID" value="NC_007969.1"/>
</dbReference>
<dbReference type="SMR" id="Q1QDW8"/>
<dbReference type="STRING" id="335284.Pcryo_0351"/>
<dbReference type="KEGG" id="pcr:Pcryo_0351"/>
<dbReference type="eggNOG" id="COG0272">
    <property type="taxonomic scope" value="Bacteria"/>
</dbReference>
<dbReference type="HOGENOM" id="CLU_007764_2_1_6"/>
<dbReference type="Proteomes" id="UP000002425">
    <property type="component" value="Chromosome"/>
</dbReference>
<dbReference type="GO" id="GO:0005829">
    <property type="term" value="C:cytosol"/>
    <property type="evidence" value="ECO:0007669"/>
    <property type="project" value="TreeGrafter"/>
</dbReference>
<dbReference type="GO" id="GO:0003911">
    <property type="term" value="F:DNA ligase (NAD+) activity"/>
    <property type="evidence" value="ECO:0007669"/>
    <property type="project" value="UniProtKB-UniRule"/>
</dbReference>
<dbReference type="GO" id="GO:0046872">
    <property type="term" value="F:metal ion binding"/>
    <property type="evidence" value="ECO:0007669"/>
    <property type="project" value="UniProtKB-KW"/>
</dbReference>
<dbReference type="GO" id="GO:0006281">
    <property type="term" value="P:DNA repair"/>
    <property type="evidence" value="ECO:0007669"/>
    <property type="project" value="UniProtKB-KW"/>
</dbReference>
<dbReference type="GO" id="GO:0006260">
    <property type="term" value="P:DNA replication"/>
    <property type="evidence" value="ECO:0007669"/>
    <property type="project" value="UniProtKB-KW"/>
</dbReference>
<dbReference type="CDD" id="cd17748">
    <property type="entry name" value="BRCT_DNA_ligase_like"/>
    <property type="match status" value="1"/>
</dbReference>
<dbReference type="CDD" id="cd00114">
    <property type="entry name" value="LIGANc"/>
    <property type="match status" value="1"/>
</dbReference>
<dbReference type="FunFam" id="1.10.150.20:FF:000006">
    <property type="entry name" value="DNA ligase"/>
    <property type="match status" value="1"/>
</dbReference>
<dbReference type="FunFam" id="1.10.150.20:FF:000007">
    <property type="entry name" value="DNA ligase"/>
    <property type="match status" value="1"/>
</dbReference>
<dbReference type="FunFam" id="2.40.50.140:FF:000012">
    <property type="entry name" value="DNA ligase"/>
    <property type="match status" value="1"/>
</dbReference>
<dbReference type="FunFam" id="3.30.470.30:FF:000001">
    <property type="entry name" value="DNA ligase"/>
    <property type="match status" value="1"/>
</dbReference>
<dbReference type="Gene3D" id="6.20.10.30">
    <property type="match status" value="1"/>
</dbReference>
<dbReference type="Gene3D" id="1.10.150.20">
    <property type="entry name" value="5' to 3' exonuclease, C-terminal subdomain"/>
    <property type="match status" value="2"/>
</dbReference>
<dbReference type="Gene3D" id="3.40.50.10190">
    <property type="entry name" value="BRCT domain"/>
    <property type="match status" value="1"/>
</dbReference>
<dbReference type="Gene3D" id="3.30.470.30">
    <property type="entry name" value="DNA ligase/mRNA capping enzyme"/>
    <property type="match status" value="1"/>
</dbReference>
<dbReference type="Gene3D" id="1.10.287.610">
    <property type="entry name" value="Helix hairpin bin"/>
    <property type="match status" value="1"/>
</dbReference>
<dbReference type="Gene3D" id="2.40.50.140">
    <property type="entry name" value="Nucleic acid-binding proteins"/>
    <property type="match status" value="1"/>
</dbReference>
<dbReference type="HAMAP" id="MF_01588">
    <property type="entry name" value="DNA_ligase_A"/>
    <property type="match status" value="1"/>
</dbReference>
<dbReference type="InterPro" id="IPR001357">
    <property type="entry name" value="BRCT_dom"/>
</dbReference>
<dbReference type="InterPro" id="IPR036420">
    <property type="entry name" value="BRCT_dom_sf"/>
</dbReference>
<dbReference type="InterPro" id="IPR041663">
    <property type="entry name" value="DisA/LigA_HHH"/>
</dbReference>
<dbReference type="InterPro" id="IPR001679">
    <property type="entry name" value="DNA_ligase"/>
</dbReference>
<dbReference type="InterPro" id="IPR018239">
    <property type="entry name" value="DNA_ligase_AS"/>
</dbReference>
<dbReference type="InterPro" id="IPR033136">
    <property type="entry name" value="DNA_ligase_CS"/>
</dbReference>
<dbReference type="InterPro" id="IPR013839">
    <property type="entry name" value="DNAligase_adenylation"/>
</dbReference>
<dbReference type="InterPro" id="IPR013840">
    <property type="entry name" value="DNAligase_N"/>
</dbReference>
<dbReference type="InterPro" id="IPR012340">
    <property type="entry name" value="NA-bd_OB-fold"/>
</dbReference>
<dbReference type="InterPro" id="IPR004150">
    <property type="entry name" value="NAD_DNA_ligase_OB"/>
</dbReference>
<dbReference type="InterPro" id="IPR010994">
    <property type="entry name" value="RuvA_2-like"/>
</dbReference>
<dbReference type="InterPro" id="IPR004149">
    <property type="entry name" value="Znf_DNAligase_C4"/>
</dbReference>
<dbReference type="NCBIfam" id="TIGR00575">
    <property type="entry name" value="dnlj"/>
    <property type="match status" value="1"/>
</dbReference>
<dbReference type="NCBIfam" id="NF005932">
    <property type="entry name" value="PRK07956.1"/>
    <property type="match status" value="1"/>
</dbReference>
<dbReference type="PANTHER" id="PTHR23389">
    <property type="entry name" value="CHROMOSOME TRANSMISSION FIDELITY FACTOR 18"/>
    <property type="match status" value="1"/>
</dbReference>
<dbReference type="PANTHER" id="PTHR23389:SF9">
    <property type="entry name" value="DNA LIGASE"/>
    <property type="match status" value="1"/>
</dbReference>
<dbReference type="Pfam" id="PF00533">
    <property type="entry name" value="BRCT"/>
    <property type="match status" value="1"/>
</dbReference>
<dbReference type="Pfam" id="PF01653">
    <property type="entry name" value="DNA_ligase_aden"/>
    <property type="match status" value="1"/>
</dbReference>
<dbReference type="Pfam" id="PF03120">
    <property type="entry name" value="DNA_ligase_OB"/>
    <property type="match status" value="1"/>
</dbReference>
<dbReference type="Pfam" id="PF03119">
    <property type="entry name" value="DNA_ligase_ZBD"/>
    <property type="match status" value="1"/>
</dbReference>
<dbReference type="Pfam" id="PF12826">
    <property type="entry name" value="HHH_2"/>
    <property type="match status" value="1"/>
</dbReference>
<dbReference type="Pfam" id="PF22745">
    <property type="entry name" value="Nlig-Ia"/>
    <property type="match status" value="1"/>
</dbReference>
<dbReference type="PIRSF" id="PIRSF001604">
    <property type="entry name" value="LigA"/>
    <property type="match status" value="1"/>
</dbReference>
<dbReference type="SMART" id="SM00292">
    <property type="entry name" value="BRCT"/>
    <property type="match status" value="1"/>
</dbReference>
<dbReference type="SMART" id="SM00532">
    <property type="entry name" value="LIGANc"/>
    <property type="match status" value="1"/>
</dbReference>
<dbReference type="SUPFAM" id="SSF52113">
    <property type="entry name" value="BRCT domain"/>
    <property type="match status" value="1"/>
</dbReference>
<dbReference type="SUPFAM" id="SSF56091">
    <property type="entry name" value="DNA ligase/mRNA capping enzyme, catalytic domain"/>
    <property type="match status" value="1"/>
</dbReference>
<dbReference type="SUPFAM" id="SSF50249">
    <property type="entry name" value="Nucleic acid-binding proteins"/>
    <property type="match status" value="1"/>
</dbReference>
<dbReference type="SUPFAM" id="SSF47781">
    <property type="entry name" value="RuvA domain 2-like"/>
    <property type="match status" value="1"/>
</dbReference>
<dbReference type="PROSITE" id="PS50172">
    <property type="entry name" value="BRCT"/>
    <property type="match status" value="1"/>
</dbReference>
<dbReference type="PROSITE" id="PS01055">
    <property type="entry name" value="DNA_LIGASE_N1"/>
    <property type="match status" value="1"/>
</dbReference>
<dbReference type="PROSITE" id="PS01056">
    <property type="entry name" value="DNA_LIGASE_N2"/>
    <property type="match status" value="1"/>
</dbReference>
<name>DNLJ_PSYCK</name>
<proteinExistence type="inferred from homology"/>